<protein>
    <recommendedName>
        <fullName>Inhibitor of Apoptosis OPG037</fullName>
    </recommendedName>
    <alternativeName>
        <fullName>Ankyrin repeat protein M1</fullName>
    </alternativeName>
</protein>
<comment type="function">
    <text evidence="1">Inhibits host apoptosis. Acts by associating with host apoptosome.</text>
</comment>
<comment type="subunit">
    <text evidence="1">May interact with host caspase-9-Apaf-1 complex.</text>
</comment>
<comment type="subcellular location">
    <subcellularLocation>
        <location evidence="1">Host cytoplasm</location>
    </subcellularLocation>
</comment>
<comment type="induction">
    <text evidence="1">Expressed in the early phase of the viral replicative cycle.</text>
</comment>
<comment type="similarity">
    <text evidence="3">Belongs to the orthopoxvirus OPG037 family.</text>
</comment>
<feature type="chain" id="PRO_0000457200" description="Inhibitor of Apoptosis OPG037">
    <location>
        <begin position="1"/>
        <end position="442"/>
    </location>
</feature>
<feature type="repeat" description="ANK 1" evidence="2">
    <location>
        <begin position="67"/>
        <end position="96"/>
    </location>
</feature>
<feature type="repeat" description="ANK 2" evidence="2">
    <location>
        <begin position="100"/>
        <end position="131"/>
    </location>
</feature>
<feature type="repeat" description="ANK 3" evidence="2">
    <location>
        <begin position="203"/>
        <end position="233"/>
    </location>
</feature>
<feature type="repeat" description="ANK 4" evidence="2">
    <location>
        <begin position="237"/>
        <end position="267"/>
    </location>
</feature>
<feature type="repeat" description="ANK 5" evidence="2">
    <location>
        <begin position="292"/>
        <end position="321"/>
    </location>
</feature>
<feature type="repeat" description="ANK 6" evidence="2">
    <location>
        <begin position="323"/>
        <end position="347"/>
    </location>
</feature>
<sequence>MSVEYYLSLYAKYNSKNLDVFRNMLQVIEPSGNYHILHAYCGIKGLDERFIEELLHRGYSPNETDDDGNYPLHIASKINNNRIVAMLLVHGADPNACDKHNKTPLYYLSGTDDEVIERINLLVQYGAKINNSVDEEGCGPLLACTDPSERVFKKIMSIGFEARIVDKFGKNHIHRHLMSDNPKASTISWMMKLGISPSKPDHDGNTPLHIVCSKTVKYVDIINLLLPSTDVNKQNKFGDSPLTLLIKTLSPAHLINKLISTSNVITDQTVNICIFYDRDDVLEIINDKGKQYDSTDFKMAVEVGSIRCVKYLLDNDIICEDAMYYAVLSEYETMVDYLLFNHFSVDSIVNGHTCMSECVRLNNPVILSKLMLHNPTSETMYITMKEIEKDKLDKSIIIPFIAYFVLMHPDFCKNCRYFTSYKRFVTDYVHEGVSYEVFDDYF</sequence>
<keyword id="KW-0040">ANK repeat</keyword>
<keyword id="KW-0244">Early protein</keyword>
<keyword id="KW-1035">Host cytoplasm</keyword>
<keyword id="KW-0945">Host-virus interaction</keyword>
<keyword id="KW-1119">Modulation of host cell apoptosis by virus</keyword>
<keyword id="KW-1185">Reference proteome</keyword>
<keyword id="KW-0677">Repeat</keyword>
<dbReference type="EMBL" id="MT903340">
    <property type="protein sequence ID" value="QNP12893.1"/>
    <property type="molecule type" value="Genomic_DNA"/>
</dbReference>
<dbReference type="RefSeq" id="YP_010377020.1">
    <property type="nucleotide sequence ID" value="NC_063383.1"/>
</dbReference>
<dbReference type="SMR" id="A0A7H0DN10"/>
<dbReference type="GeneID" id="72551434"/>
<dbReference type="Proteomes" id="UP000516359">
    <property type="component" value="Genome"/>
</dbReference>
<dbReference type="GO" id="GO:0030430">
    <property type="term" value="C:host cell cytoplasm"/>
    <property type="evidence" value="ECO:0007669"/>
    <property type="project" value="UniProtKB-SubCell"/>
</dbReference>
<dbReference type="GO" id="GO:0052150">
    <property type="term" value="P:symbiont-mediated perturbation of host apoptosis"/>
    <property type="evidence" value="ECO:0007669"/>
    <property type="project" value="UniProtKB-KW"/>
</dbReference>
<dbReference type="Gene3D" id="1.25.40.20">
    <property type="entry name" value="Ankyrin repeat-containing domain"/>
    <property type="match status" value="2"/>
</dbReference>
<dbReference type="InterPro" id="IPR002110">
    <property type="entry name" value="Ankyrin_rpt"/>
</dbReference>
<dbReference type="InterPro" id="IPR036770">
    <property type="entry name" value="Ankyrin_rpt-contain_sf"/>
</dbReference>
<dbReference type="InterPro" id="IPR051165">
    <property type="entry name" value="Multifunctional_ANK_Repeat"/>
</dbReference>
<dbReference type="PANTHER" id="PTHR24123:SF142">
    <property type="entry name" value="ANKYRIN"/>
    <property type="match status" value="1"/>
</dbReference>
<dbReference type="PANTHER" id="PTHR24123">
    <property type="entry name" value="ANKYRIN REPEAT-CONTAINING"/>
    <property type="match status" value="1"/>
</dbReference>
<dbReference type="Pfam" id="PF12796">
    <property type="entry name" value="Ank_2"/>
    <property type="match status" value="2"/>
</dbReference>
<dbReference type="SMART" id="SM00248">
    <property type="entry name" value="ANK"/>
    <property type="match status" value="7"/>
</dbReference>
<dbReference type="SUPFAM" id="SSF48403">
    <property type="entry name" value="Ankyrin repeat"/>
    <property type="match status" value="2"/>
</dbReference>
<dbReference type="PROSITE" id="PS50297">
    <property type="entry name" value="ANK_REP_REGION"/>
    <property type="match status" value="1"/>
</dbReference>
<dbReference type="PROSITE" id="PS50088">
    <property type="entry name" value="ANK_REPEAT"/>
    <property type="match status" value="1"/>
</dbReference>
<proteinExistence type="inferred from homology"/>
<evidence type="ECO:0000250" key="1">
    <source>
        <dbReference type="UniProtKB" id="P14356"/>
    </source>
</evidence>
<evidence type="ECO:0000255" key="2"/>
<evidence type="ECO:0000305" key="3"/>
<evidence type="ECO:0000312" key="4">
    <source>
        <dbReference type="EMBL" id="QNP12893.1"/>
    </source>
</evidence>
<evidence type="ECO:0000312" key="5">
    <source>
        <dbReference type="Proteomes" id="UP000516359"/>
    </source>
</evidence>
<reference key="1">
    <citation type="journal article" date="2022" name="J. Infect. Dis.">
        <title>Exportation of Monkeypox virus from the African continent.</title>
        <authorList>
            <person name="Mauldin M.R."/>
            <person name="McCollum A.M."/>
            <person name="Nakazawa Y.J."/>
            <person name="Mandra A."/>
            <person name="Whitehouse E.R."/>
            <person name="Davidson W."/>
            <person name="Zhao H."/>
            <person name="Gao J."/>
            <person name="Li Y."/>
            <person name="Doty J."/>
            <person name="Yinka-Ogunleye A."/>
            <person name="Akinpelu A."/>
            <person name="Aruna O."/>
            <person name="Naidoo D."/>
            <person name="Lewandowski K."/>
            <person name="Afrough B."/>
            <person name="Graham V."/>
            <person name="Aarons E."/>
            <person name="Hewson R."/>
            <person name="Vipond R."/>
            <person name="Dunning J."/>
            <person name="Chand M."/>
            <person name="Brown C."/>
            <person name="Cohen-Gihon I."/>
            <person name="Erez N."/>
            <person name="Shifman O."/>
            <person name="Israeli O."/>
            <person name="Sharon M."/>
            <person name="Schwartz E."/>
            <person name="Beth-Din A."/>
            <person name="Zvi A."/>
            <person name="Mak T.M."/>
            <person name="Ng Y.K."/>
            <person name="Cui L."/>
            <person name="Lin R.T.P."/>
            <person name="Olson V.A."/>
            <person name="Brooks T."/>
            <person name="Paran N."/>
            <person name="Ihekweazu C."/>
            <person name="Reynolds M.G."/>
        </authorList>
    </citation>
    <scope>NUCLEOTIDE SEQUENCE [LARGE SCALE GENOMIC DNA]</scope>
    <source>
        <strain>MPXV-M5312_HM12_Rivers</strain>
    </source>
</reference>
<accession>A0A7H0DN10</accession>
<organism evidence="4 5">
    <name type="scientific">Monkeypox virus</name>
    <dbReference type="NCBI Taxonomy" id="10244"/>
    <lineage>
        <taxon>Viruses</taxon>
        <taxon>Varidnaviria</taxon>
        <taxon>Bamfordvirae</taxon>
        <taxon>Nucleocytoviricota</taxon>
        <taxon>Pokkesviricetes</taxon>
        <taxon>Chitovirales</taxon>
        <taxon>Poxviridae</taxon>
        <taxon>Chordopoxvirinae</taxon>
        <taxon>Orthopoxvirus</taxon>
    </lineage>
</organism>
<organismHost>
    <name type="scientific">Cynomys gunnisoni</name>
    <name type="common">Gunnison's prairie dog</name>
    <name type="synonym">Spermophilus gunnisoni</name>
    <dbReference type="NCBI Taxonomy" id="45479"/>
</organismHost>
<organismHost>
    <name type="scientific">Cynomys leucurus</name>
    <name type="common">White-tailed prairie dog</name>
    <dbReference type="NCBI Taxonomy" id="99825"/>
</organismHost>
<organismHost>
    <name type="scientific">Cynomys ludovicianus</name>
    <name type="common">Black-tailed prairie dog</name>
    <dbReference type="NCBI Taxonomy" id="45480"/>
</organismHost>
<organismHost>
    <name type="scientific">Cynomys mexicanus</name>
    <name type="common">Mexican prairie dog</name>
    <dbReference type="NCBI Taxonomy" id="99826"/>
</organismHost>
<organismHost>
    <name type="scientific">Cynomys parvidens</name>
    <name type="common">Utah prairie dog</name>
    <dbReference type="NCBI Taxonomy" id="99827"/>
</organismHost>
<organismHost>
    <name type="scientific">Gliridae</name>
    <name type="common">dormice</name>
    <dbReference type="NCBI Taxonomy" id="30650"/>
</organismHost>
<organismHost>
    <name type="scientific">Heliosciurus ruwenzorii</name>
    <name type="common">Ruwenzori sun squirrel</name>
    <dbReference type="NCBI Taxonomy" id="226685"/>
</organismHost>
<organismHost>
    <name type="scientific">Homo sapiens</name>
    <name type="common">Human</name>
    <dbReference type="NCBI Taxonomy" id="9606"/>
</organismHost>
<organismHost>
    <name type="scientific">Mus musculus</name>
    <name type="common">Mouse</name>
    <dbReference type="NCBI Taxonomy" id="10090"/>
</organismHost>
<name>PG037_MONPV</name>
<gene>
    <name type="primary">OPG037</name>
    <name type="ORF">MPXVgp025</name>
</gene>